<feature type="chain" id="PRO_0000365839" description="Probable lysosomal cobalamin transporter">
    <location>
        <begin position="1"/>
        <end position="596"/>
    </location>
</feature>
<feature type="transmembrane region" description="Helical" evidence="2">
    <location>
        <begin position="7"/>
        <end position="27"/>
    </location>
</feature>
<feature type="transmembrane region" description="Helical" evidence="2">
    <location>
        <begin position="46"/>
        <end position="66"/>
    </location>
</feature>
<feature type="transmembrane region" description="Helical" evidence="2">
    <location>
        <begin position="95"/>
        <end position="115"/>
    </location>
</feature>
<feature type="transmembrane region" description="Helical" evidence="2">
    <location>
        <begin position="145"/>
        <end position="165"/>
    </location>
</feature>
<feature type="transmembrane region" description="Helical" evidence="2">
    <location>
        <begin position="196"/>
        <end position="216"/>
    </location>
</feature>
<feature type="transmembrane region" description="Helical" evidence="2">
    <location>
        <begin position="313"/>
        <end position="333"/>
    </location>
</feature>
<feature type="transmembrane region" description="Helical" evidence="2">
    <location>
        <begin position="350"/>
        <end position="370"/>
    </location>
</feature>
<feature type="transmembrane region" description="Helical" evidence="2">
    <location>
        <begin position="376"/>
        <end position="396"/>
    </location>
</feature>
<feature type="transmembrane region" description="Helical" evidence="2">
    <location>
        <begin position="420"/>
        <end position="440"/>
    </location>
</feature>
<feature type="transmembrane region" description="Helical" evidence="2">
    <location>
        <begin position="507"/>
        <end position="527"/>
    </location>
</feature>
<feature type="region of interest" description="Disordered" evidence="3">
    <location>
        <begin position="566"/>
        <end position="596"/>
    </location>
</feature>
<feature type="compositionally biased region" description="Basic and acidic residues" evidence="3">
    <location>
        <begin position="587"/>
        <end position="596"/>
    </location>
</feature>
<evidence type="ECO:0000250" key="1"/>
<evidence type="ECO:0000255" key="2"/>
<evidence type="ECO:0000256" key="3">
    <source>
        <dbReference type="SAM" id="MobiDB-lite"/>
    </source>
</evidence>
<evidence type="ECO:0000305" key="4"/>
<reference key="1">
    <citation type="journal article" date="2011" name="PLoS Genet.">
        <title>Genomic analysis of the necrotrophic fungal pathogens Sclerotinia sclerotiorum and Botrytis cinerea.</title>
        <authorList>
            <person name="Amselem J."/>
            <person name="Cuomo C.A."/>
            <person name="van Kan J.A.L."/>
            <person name="Viaud M."/>
            <person name="Benito E.P."/>
            <person name="Couloux A."/>
            <person name="Coutinho P.M."/>
            <person name="de Vries R.P."/>
            <person name="Dyer P.S."/>
            <person name="Fillinger S."/>
            <person name="Fournier E."/>
            <person name="Gout L."/>
            <person name="Hahn M."/>
            <person name="Kohn L."/>
            <person name="Lapalu N."/>
            <person name="Plummer K.M."/>
            <person name="Pradier J.-M."/>
            <person name="Quevillon E."/>
            <person name="Sharon A."/>
            <person name="Simon A."/>
            <person name="ten Have A."/>
            <person name="Tudzynski B."/>
            <person name="Tudzynski P."/>
            <person name="Wincker P."/>
            <person name="Andrew M."/>
            <person name="Anthouard V."/>
            <person name="Beever R.E."/>
            <person name="Beffa R."/>
            <person name="Benoit I."/>
            <person name="Bouzid O."/>
            <person name="Brault B."/>
            <person name="Chen Z."/>
            <person name="Choquer M."/>
            <person name="Collemare J."/>
            <person name="Cotton P."/>
            <person name="Danchin E.G."/>
            <person name="Da Silva C."/>
            <person name="Gautier A."/>
            <person name="Giraud C."/>
            <person name="Giraud T."/>
            <person name="Gonzalez C."/>
            <person name="Grossetete S."/>
            <person name="Gueldener U."/>
            <person name="Henrissat B."/>
            <person name="Howlett B.J."/>
            <person name="Kodira C."/>
            <person name="Kretschmer M."/>
            <person name="Lappartient A."/>
            <person name="Leroch M."/>
            <person name="Levis C."/>
            <person name="Mauceli E."/>
            <person name="Neuveglise C."/>
            <person name="Oeser B."/>
            <person name="Pearson M."/>
            <person name="Poulain J."/>
            <person name="Poussereau N."/>
            <person name="Quesneville H."/>
            <person name="Rascle C."/>
            <person name="Schumacher J."/>
            <person name="Segurens B."/>
            <person name="Sexton A."/>
            <person name="Silva E."/>
            <person name="Sirven C."/>
            <person name="Soanes D.M."/>
            <person name="Talbot N.J."/>
            <person name="Templeton M."/>
            <person name="Yandava C."/>
            <person name="Yarden O."/>
            <person name="Zeng Q."/>
            <person name="Rollins J.A."/>
            <person name="Lebrun M.-H."/>
            <person name="Dickman M."/>
        </authorList>
    </citation>
    <scope>NUCLEOTIDE SEQUENCE [LARGE SCALE GENOMIC DNA]</scope>
    <source>
        <strain>ATCC 18683 / 1980 / Ss-1</strain>
    </source>
</reference>
<sequence>MALIQTAFIWVAYAVAVGIVALIAAIFAYTYQTPRDRSALVSTITIITLTSLLATVLLLPVDIALVSSTTSSKLGAKKDWATPETVRNILLTLKIVYYALYSLDAVLCLLVIPFTYFFYEEYDEVDTEEGTQTLGQRLLGAAKYTLFFVVLVVILFLVGFFAPVARGGGSDMDLDYFKRLLAENHGERALTFALGLLISLGTLLYILYTSVGLALLPMSFIKSAPSISAPQLSETTASALEQNRERQRQLEGRNVGRNAGLSAKDQRELEALHREERTLVRRERLAAEARGEGKSFIVKAWTKTCAIFRPLKLVGGILLLLLSVIIWASMLITGIDKAKNSFCKQHCGYILGSINIFQPLNWVFVKSSIVFPIDYVLMALLVLFLFSSSVTGIAVIGLRFLWVRLFEIRKGHTSPQALLMATVMLTLIILAINYSIAMIIAPQYAIYGAQTFCTNPTRFPGDQPDCSNHPELIKTCSELSSGEGAEKVCTPTVVSTFLNRVTVNFPFFGALAFWAQFVFLAIFLIVFVTALFRTPKLDLSELDEDAEADEEEGLLATTGRRFGATWQDIRGKAKNQTPSRGAAGRGIRGDDDHDDD</sequence>
<dbReference type="EMBL" id="CH476639">
    <property type="protein sequence ID" value="EDN96051.1"/>
    <property type="molecule type" value="Genomic_DNA"/>
</dbReference>
<dbReference type="RefSeq" id="XP_001587227.1">
    <property type="nucleotide sequence ID" value="XM_001587177.1"/>
</dbReference>
<dbReference type="SMR" id="A7F2V9"/>
<dbReference type="STRING" id="665079.A7F2V9"/>
<dbReference type="EnsemblFungi" id="EDN96051">
    <property type="protein sequence ID" value="EDN96051"/>
    <property type="gene ID" value="SS1G_12257"/>
</dbReference>
<dbReference type="GeneID" id="5483347"/>
<dbReference type="KEGG" id="ssl:SS1G_12257"/>
<dbReference type="VEuPathDB" id="FungiDB:sscle_05g042210"/>
<dbReference type="eggNOG" id="ENOG502QQ2T">
    <property type="taxonomic scope" value="Eukaryota"/>
</dbReference>
<dbReference type="HOGENOM" id="CLU_028341_1_0_1"/>
<dbReference type="InParanoid" id="A7F2V9"/>
<dbReference type="OMA" id="FWAQFVF"/>
<dbReference type="OrthoDB" id="73273at2759"/>
<dbReference type="Proteomes" id="UP000001312">
    <property type="component" value="Unassembled WGS sequence"/>
</dbReference>
<dbReference type="GO" id="GO:0005774">
    <property type="term" value="C:vacuolar membrane"/>
    <property type="evidence" value="ECO:0000318"/>
    <property type="project" value="GO_Central"/>
</dbReference>
<dbReference type="GO" id="GO:0031419">
    <property type="term" value="F:cobalamin binding"/>
    <property type="evidence" value="ECO:0007669"/>
    <property type="project" value="UniProtKB-KW"/>
</dbReference>
<dbReference type="GO" id="GO:0072665">
    <property type="term" value="P:protein localization to vacuole"/>
    <property type="evidence" value="ECO:0000318"/>
    <property type="project" value="GO_Central"/>
</dbReference>
<dbReference type="InterPro" id="IPR050854">
    <property type="entry name" value="LMBD1_LysCbl_Transport"/>
</dbReference>
<dbReference type="InterPro" id="IPR006876">
    <property type="entry name" value="LMBR1-like_membr_prot"/>
</dbReference>
<dbReference type="PANTHER" id="PTHR16130:SF2">
    <property type="entry name" value="LYSOSOMAL COBALAMIN TRANSPORT ESCORT PROTEIN LMBD1"/>
    <property type="match status" value="1"/>
</dbReference>
<dbReference type="PANTHER" id="PTHR16130">
    <property type="entry name" value="LYSOSOMAL COBALAMIN TRANSPORTER-RELATED"/>
    <property type="match status" value="1"/>
</dbReference>
<dbReference type="Pfam" id="PF04791">
    <property type="entry name" value="LMBR1"/>
    <property type="match status" value="1"/>
</dbReference>
<organism>
    <name type="scientific">Sclerotinia sclerotiorum (strain ATCC 18683 / 1980 / Ss-1)</name>
    <name type="common">White mold</name>
    <name type="synonym">Whetzelinia sclerotiorum</name>
    <dbReference type="NCBI Taxonomy" id="665079"/>
    <lineage>
        <taxon>Eukaryota</taxon>
        <taxon>Fungi</taxon>
        <taxon>Dikarya</taxon>
        <taxon>Ascomycota</taxon>
        <taxon>Pezizomycotina</taxon>
        <taxon>Leotiomycetes</taxon>
        <taxon>Helotiales</taxon>
        <taxon>Sclerotiniaceae</taxon>
        <taxon>Sclerotinia</taxon>
    </lineage>
</organism>
<name>LMBD1_SCLS1</name>
<gene>
    <name type="ORF">SS1G_12257</name>
</gene>
<proteinExistence type="inferred from homology"/>
<keyword id="KW-0846">Cobalamin</keyword>
<keyword id="KW-0170">Cobalt</keyword>
<keyword id="KW-0458">Lysosome</keyword>
<keyword id="KW-0472">Membrane</keyword>
<keyword id="KW-1185">Reference proteome</keyword>
<keyword id="KW-0812">Transmembrane</keyword>
<keyword id="KW-1133">Transmembrane helix</keyword>
<keyword id="KW-0813">Transport</keyword>
<comment type="function">
    <text evidence="1">Probable lysosomal cobalamin transporter. Required to export cobalamin from lysosomes allowing its conversion to cofactors (By similarity).</text>
</comment>
<comment type="subcellular location">
    <subcellularLocation>
        <location evidence="1">Lysosome membrane</location>
        <topology evidence="1">Multi-pass membrane protein</topology>
    </subcellularLocation>
</comment>
<comment type="similarity">
    <text evidence="4">Belongs to the LIMR family. LMBRD1 subfamily.</text>
</comment>
<accession>A7F2V9</accession>
<protein>
    <recommendedName>
        <fullName>Probable lysosomal cobalamin transporter</fullName>
    </recommendedName>
</protein>